<evidence type="ECO:0000255" key="1">
    <source>
        <dbReference type="HAMAP-Rule" id="MF_01139"/>
    </source>
</evidence>
<keyword id="KW-0460">Magnesium</keyword>
<keyword id="KW-0479">Metal-binding</keyword>
<keyword id="KW-1185">Reference proteome</keyword>
<keyword id="KW-0808">Transferase</keyword>
<proteinExistence type="inferred from homology"/>
<gene>
    <name evidence="1" type="primary">uppS</name>
    <name type="ordered locus">LL2130</name>
    <name type="ORF">L183602</name>
</gene>
<dbReference type="EC" id="2.5.1.-" evidence="1"/>
<dbReference type="EMBL" id="AE005176">
    <property type="protein sequence ID" value="AAK06228.1"/>
    <property type="molecule type" value="Genomic_DNA"/>
</dbReference>
<dbReference type="PIR" id="B86891">
    <property type="entry name" value="B86891"/>
</dbReference>
<dbReference type="RefSeq" id="NP_268287.1">
    <property type="nucleotide sequence ID" value="NC_002662.1"/>
</dbReference>
<dbReference type="RefSeq" id="WP_010906326.1">
    <property type="nucleotide sequence ID" value="NC_002662.1"/>
</dbReference>
<dbReference type="SMR" id="Q9CDT1"/>
<dbReference type="PaxDb" id="272623-L183602"/>
<dbReference type="EnsemblBacteria" id="AAK06228">
    <property type="protein sequence ID" value="AAK06228"/>
    <property type="gene ID" value="L183602"/>
</dbReference>
<dbReference type="KEGG" id="lla:L183602"/>
<dbReference type="PATRIC" id="fig|272623.7.peg.2289"/>
<dbReference type="eggNOG" id="COG0020">
    <property type="taxonomic scope" value="Bacteria"/>
</dbReference>
<dbReference type="HOGENOM" id="CLU_038505_1_1_9"/>
<dbReference type="OrthoDB" id="4191603at2"/>
<dbReference type="Proteomes" id="UP000002196">
    <property type="component" value="Chromosome"/>
</dbReference>
<dbReference type="GO" id="GO:0005829">
    <property type="term" value="C:cytosol"/>
    <property type="evidence" value="ECO:0007669"/>
    <property type="project" value="TreeGrafter"/>
</dbReference>
<dbReference type="GO" id="GO:0008834">
    <property type="term" value="F:ditrans,polycis-undecaprenyl-diphosphate synthase [(2E,6E)-farnesyl-diphosphate specific] activity"/>
    <property type="evidence" value="ECO:0007669"/>
    <property type="project" value="TreeGrafter"/>
</dbReference>
<dbReference type="GO" id="GO:0000287">
    <property type="term" value="F:magnesium ion binding"/>
    <property type="evidence" value="ECO:0007669"/>
    <property type="project" value="UniProtKB-UniRule"/>
</dbReference>
<dbReference type="GO" id="GO:0030145">
    <property type="term" value="F:manganese ion binding"/>
    <property type="evidence" value="ECO:0007669"/>
    <property type="project" value="TreeGrafter"/>
</dbReference>
<dbReference type="GO" id="GO:0016094">
    <property type="term" value="P:polyprenol biosynthetic process"/>
    <property type="evidence" value="ECO:0007669"/>
    <property type="project" value="TreeGrafter"/>
</dbReference>
<dbReference type="CDD" id="cd00475">
    <property type="entry name" value="Cis_IPPS"/>
    <property type="match status" value="1"/>
</dbReference>
<dbReference type="FunFam" id="3.40.1180.10:FF:000001">
    <property type="entry name" value="(2E,6E)-farnesyl-diphosphate-specific ditrans,polycis-undecaprenyl-diphosphate synthase"/>
    <property type="match status" value="1"/>
</dbReference>
<dbReference type="Gene3D" id="3.40.1180.10">
    <property type="entry name" value="Decaprenyl diphosphate synthase-like"/>
    <property type="match status" value="1"/>
</dbReference>
<dbReference type="HAMAP" id="MF_01139">
    <property type="entry name" value="ISPT"/>
    <property type="match status" value="1"/>
</dbReference>
<dbReference type="InterPro" id="IPR001441">
    <property type="entry name" value="UPP_synth-like"/>
</dbReference>
<dbReference type="InterPro" id="IPR018520">
    <property type="entry name" value="UPP_synth-like_CS"/>
</dbReference>
<dbReference type="InterPro" id="IPR036424">
    <property type="entry name" value="UPP_synth-like_sf"/>
</dbReference>
<dbReference type="NCBIfam" id="NF011405">
    <property type="entry name" value="PRK14830.1"/>
    <property type="match status" value="1"/>
</dbReference>
<dbReference type="NCBIfam" id="TIGR00055">
    <property type="entry name" value="uppS"/>
    <property type="match status" value="1"/>
</dbReference>
<dbReference type="PANTHER" id="PTHR10291:SF0">
    <property type="entry name" value="DEHYDRODOLICHYL DIPHOSPHATE SYNTHASE 2"/>
    <property type="match status" value="1"/>
</dbReference>
<dbReference type="PANTHER" id="PTHR10291">
    <property type="entry name" value="DEHYDRODOLICHYL DIPHOSPHATE SYNTHASE FAMILY MEMBER"/>
    <property type="match status" value="1"/>
</dbReference>
<dbReference type="Pfam" id="PF01255">
    <property type="entry name" value="Prenyltransf"/>
    <property type="match status" value="1"/>
</dbReference>
<dbReference type="SUPFAM" id="SSF64005">
    <property type="entry name" value="Undecaprenyl diphosphate synthase"/>
    <property type="match status" value="1"/>
</dbReference>
<dbReference type="PROSITE" id="PS01066">
    <property type="entry name" value="UPP_SYNTHASE"/>
    <property type="match status" value="1"/>
</dbReference>
<accession>Q9CDT1</accession>
<reference key="1">
    <citation type="journal article" date="2001" name="Genome Res.">
        <title>The complete genome sequence of the lactic acid bacterium Lactococcus lactis ssp. lactis IL1403.</title>
        <authorList>
            <person name="Bolotin A."/>
            <person name="Wincker P."/>
            <person name="Mauger S."/>
            <person name="Jaillon O."/>
            <person name="Malarme K."/>
            <person name="Weissenbach J."/>
            <person name="Ehrlich S.D."/>
            <person name="Sorokin A."/>
        </authorList>
    </citation>
    <scope>NUCLEOTIDE SEQUENCE [LARGE SCALE GENOMIC DNA]</scope>
    <source>
        <strain>IL1403</strain>
    </source>
</reference>
<comment type="function">
    <text evidence="1">Catalyzes the condensation of isopentenyl diphosphate (IPP) with allylic pyrophosphates generating different type of terpenoids.</text>
</comment>
<comment type="cofactor">
    <cofactor evidence="1">
        <name>Mg(2+)</name>
        <dbReference type="ChEBI" id="CHEBI:18420"/>
    </cofactor>
    <text evidence="1">Binds 2 magnesium ions per subunit.</text>
</comment>
<comment type="subunit">
    <text evidence="1">Homodimer.</text>
</comment>
<comment type="similarity">
    <text evidence="1">Belongs to the UPP synthase family.</text>
</comment>
<name>ISPT_LACLA</name>
<sequence>MFNNLKNKEQEELLPEHIGIIMDGNGRWAKQKGKPRIFGHKAGMDSLKDVAVHGARRGIKVMTVYAFSTENWTRPVDEVKFIMSLPIDFYSKYVPVLKEENIQIRMIGEREGLPKATLDSIDRAAQETSENDGMILNFAMNYGGRRDIILAIQELAKSGQDLSLLTEEELSKHLQTAVLSENLRDPDLIIRTSGEQRMSNFLTWQSAYSELYFAQTAWPDFDDKELDKAISAFQKRDRRYGGVK</sequence>
<feature type="chain" id="PRO_0000123627" description="Isoprenyl transferase">
    <location>
        <begin position="1"/>
        <end position="244"/>
    </location>
</feature>
<feature type="active site" evidence="1">
    <location>
        <position position="23"/>
    </location>
</feature>
<feature type="active site" description="Proton acceptor" evidence="1">
    <location>
        <position position="71"/>
    </location>
</feature>
<feature type="binding site" evidence="1">
    <location>
        <position position="23"/>
    </location>
    <ligand>
        <name>Mg(2+)</name>
        <dbReference type="ChEBI" id="CHEBI:18420"/>
    </ligand>
</feature>
<feature type="binding site" evidence="1">
    <location>
        <begin position="24"/>
        <end position="27"/>
    </location>
    <ligand>
        <name>substrate</name>
    </ligand>
</feature>
<feature type="binding site" evidence="1">
    <location>
        <position position="28"/>
    </location>
    <ligand>
        <name>substrate</name>
    </ligand>
</feature>
<feature type="binding site" evidence="1">
    <location>
        <position position="36"/>
    </location>
    <ligand>
        <name>substrate</name>
    </ligand>
</feature>
<feature type="binding site" evidence="1">
    <location>
        <position position="40"/>
    </location>
    <ligand>
        <name>substrate</name>
    </ligand>
</feature>
<feature type="binding site" evidence="1">
    <location>
        <begin position="68"/>
        <end position="70"/>
    </location>
    <ligand>
        <name>substrate</name>
    </ligand>
</feature>
<feature type="binding site" evidence="1">
    <location>
        <position position="72"/>
    </location>
    <ligand>
        <name>substrate</name>
    </ligand>
</feature>
<feature type="binding site" evidence="1">
    <location>
        <position position="74"/>
    </location>
    <ligand>
        <name>substrate</name>
    </ligand>
</feature>
<feature type="binding site" evidence="1">
    <location>
        <position position="191"/>
    </location>
    <ligand>
        <name>substrate</name>
    </ligand>
</feature>
<feature type="binding site" evidence="1">
    <location>
        <begin position="197"/>
        <end position="199"/>
    </location>
    <ligand>
        <name>substrate</name>
    </ligand>
</feature>
<feature type="binding site" evidence="1">
    <location>
        <position position="210"/>
    </location>
    <ligand>
        <name>Mg(2+)</name>
        <dbReference type="ChEBI" id="CHEBI:18420"/>
    </ligand>
</feature>
<protein>
    <recommendedName>
        <fullName evidence="1">Isoprenyl transferase</fullName>
        <ecNumber evidence="1">2.5.1.-</ecNumber>
    </recommendedName>
</protein>
<organism>
    <name type="scientific">Lactococcus lactis subsp. lactis (strain IL1403)</name>
    <name type="common">Streptococcus lactis</name>
    <dbReference type="NCBI Taxonomy" id="272623"/>
    <lineage>
        <taxon>Bacteria</taxon>
        <taxon>Bacillati</taxon>
        <taxon>Bacillota</taxon>
        <taxon>Bacilli</taxon>
        <taxon>Lactobacillales</taxon>
        <taxon>Streptococcaceae</taxon>
        <taxon>Lactococcus</taxon>
    </lineage>
</organism>